<accession>P35719</accession>
<accession>D6VX54</accession>
<name>MRP8_YEAST</name>
<proteinExistence type="evidence at protein level"/>
<feature type="chain" id="PRO_0000087699" description="Uncharacterized protein MRP8">
    <location>
        <begin position="1"/>
        <end position="219"/>
    </location>
</feature>
<feature type="modified residue" description="Phosphoserine" evidence="5">
    <location>
        <position position="23"/>
    </location>
</feature>
<feature type="cross-link" description="Glycyl lysine isopeptide (Lys-Gly) (interchain with G-Cter in SUMO)" evidence="3">
    <location>
        <position position="137"/>
    </location>
</feature>
<keyword id="KW-0963">Cytoplasm</keyword>
<keyword id="KW-1017">Isopeptide bond</keyword>
<keyword id="KW-0597">Phosphoprotein</keyword>
<keyword id="KW-1185">Reference proteome</keyword>
<keyword id="KW-0832">Ubl conjugation</keyword>
<protein>
    <recommendedName>
        <fullName>Uncharacterized protein MRP8</fullName>
    </recommendedName>
</protein>
<reference key="1">
    <citation type="journal article" date="1992" name="Yeast">
        <title>Molecular cloning and physical analysis of an 8.2 kb segment of chromosome XI of Saccharomyces cerevisiae reveals five tightly linked genes.</title>
        <authorList>
            <person name="Abraham P.R."/>
            <person name="Mulder A."/>
            <person name="Van'T Riet J."/>
            <person name="Planta R.J."/>
            <person name="Raue H.A."/>
        </authorList>
    </citation>
    <scope>NUCLEOTIDE SEQUENCE [GENOMIC DNA]</scope>
</reference>
<reference key="2">
    <citation type="journal article" date="1994" name="Nature">
        <title>Complete DNA sequence of yeast chromosome XI.</title>
        <authorList>
            <person name="Dujon B."/>
            <person name="Alexandraki D."/>
            <person name="Andre B."/>
            <person name="Ansorge W."/>
            <person name="Baladron V."/>
            <person name="Ballesta J.P.G."/>
            <person name="Banrevi A."/>
            <person name="Bolle P.-A."/>
            <person name="Bolotin-Fukuhara M."/>
            <person name="Bossier P."/>
            <person name="Bou G."/>
            <person name="Boyer J."/>
            <person name="Buitrago M.J."/>
            <person name="Cheret G."/>
            <person name="Colleaux L."/>
            <person name="Daignan-Fornier B."/>
            <person name="del Rey F."/>
            <person name="Dion C."/>
            <person name="Domdey H."/>
            <person name="Duesterhoeft A."/>
            <person name="Duesterhus S."/>
            <person name="Entian K.-D."/>
            <person name="Erfle H."/>
            <person name="Esteban P.F."/>
            <person name="Feldmann H."/>
            <person name="Fernandes L."/>
            <person name="Fobo G.M."/>
            <person name="Fritz C."/>
            <person name="Fukuhara H."/>
            <person name="Gabel C."/>
            <person name="Gaillon L."/>
            <person name="Garcia-Cantalejo J.M."/>
            <person name="Garcia-Ramirez J.J."/>
            <person name="Gent M.E."/>
            <person name="Ghazvini M."/>
            <person name="Goffeau A."/>
            <person name="Gonzalez A."/>
            <person name="Grothues D."/>
            <person name="Guerreiro P."/>
            <person name="Hegemann J.H."/>
            <person name="Hewitt N."/>
            <person name="Hilger F."/>
            <person name="Hollenberg C.P."/>
            <person name="Horaitis O."/>
            <person name="Indge K.J."/>
            <person name="Jacquier A."/>
            <person name="James C.M."/>
            <person name="Jauniaux J.-C."/>
            <person name="Jimenez A."/>
            <person name="Keuchel H."/>
            <person name="Kirchrath L."/>
            <person name="Kleine K."/>
            <person name="Koetter P."/>
            <person name="Legrain P."/>
            <person name="Liebl S."/>
            <person name="Louis E.J."/>
            <person name="Maia e Silva A."/>
            <person name="Marck C."/>
            <person name="Monnier A.-L."/>
            <person name="Moestl D."/>
            <person name="Mueller S."/>
            <person name="Obermaier B."/>
            <person name="Oliver S.G."/>
            <person name="Pallier C."/>
            <person name="Pascolo S."/>
            <person name="Pfeiffer F."/>
            <person name="Philippsen P."/>
            <person name="Planta R.J."/>
            <person name="Pohl F.M."/>
            <person name="Pohl T.M."/>
            <person name="Poehlmann R."/>
            <person name="Portetelle D."/>
            <person name="Purnelle B."/>
            <person name="Puzos V."/>
            <person name="Ramezani Rad M."/>
            <person name="Rasmussen S.W."/>
            <person name="Remacha M.A."/>
            <person name="Revuelta J.L."/>
            <person name="Richard G.-F."/>
            <person name="Rieger M."/>
            <person name="Rodrigues-Pousada C."/>
            <person name="Rose M."/>
            <person name="Rupp T."/>
            <person name="Santos M.A."/>
            <person name="Schwager C."/>
            <person name="Sensen C."/>
            <person name="Skala J."/>
            <person name="Soares H."/>
            <person name="Sor F."/>
            <person name="Stegemann J."/>
            <person name="Tettelin H."/>
            <person name="Thierry A."/>
            <person name="Tzermia M."/>
            <person name="Urrestarazu L.A."/>
            <person name="van Dyck L."/>
            <person name="van Vliet-Reedijk J.C."/>
            <person name="Valens M."/>
            <person name="Vandenbol M."/>
            <person name="Vilela C."/>
            <person name="Vissers S."/>
            <person name="von Wettstein D."/>
            <person name="Voss H."/>
            <person name="Wiemann S."/>
            <person name="Xu G."/>
            <person name="Zimmermann J."/>
            <person name="Haasemann M."/>
            <person name="Becker I."/>
            <person name="Mewes H.-W."/>
        </authorList>
    </citation>
    <scope>NUCLEOTIDE SEQUENCE [LARGE SCALE GENOMIC DNA]</scope>
    <source>
        <strain>ATCC 204508 / S288c</strain>
    </source>
</reference>
<reference key="3">
    <citation type="journal article" date="2014" name="G3 (Bethesda)">
        <title>The reference genome sequence of Saccharomyces cerevisiae: Then and now.</title>
        <authorList>
            <person name="Engel S.R."/>
            <person name="Dietrich F.S."/>
            <person name="Fisk D.G."/>
            <person name="Binkley G."/>
            <person name="Balakrishnan R."/>
            <person name="Costanzo M.C."/>
            <person name="Dwight S.S."/>
            <person name="Hitz B.C."/>
            <person name="Karra K."/>
            <person name="Nash R.S."/>
            <person name="Weng S."/>
            <person name="Wong E.D."/>
            <person name="Lloyd P."/>
            <person name="Skrzypek M.S."/>
            <person name="Miyasato S.R."/>
            <person name="Simison M."/>
            <person name="Cherry J.M."/>
        </authorList>
    </citation>
    <scope>GENOME REANNOTATION</scope>
    <source>
        <strain>ATCC 204508 / S288c</strain>
    </source>
</reference>
<reference key="4">
    <citation type="journal article" date="2007" name="Genome Res.">
        <title>Approaching a complete repository of sequence-verified protein-encoding clones for Saccharomyces cerevisiae.</title>
        <authorList>
            <person name="Hu Y."/>
            <person name="Rolfs A."/>
            <person name="Bhullar B."/>
            <person name="Murthy T.V.S."/>
            <person name="Zhu C."/>
            <person name="Berger M.F."/>
            <person name="Camargo A.A."/>
            <person name="Kelley F."/>
            <person name="McCarron S."/>
            <person name="Jepson D."/>
            <person name="Richardson A."/>
            <person name="Raphael J."/>
            <person name="Moreira D."/>
            <person name="Taycher E."/>
            <person name="Zuo D."/>
            <person name="Mohr S."/>
            <person name="Kane M.F."/>
            <person name="Williamson J."/>
            <person name="Simpson A.J.G."/>
            <person name="Bulyk M.L."/>
            <person name="Harlow E."/>
            <person name="Marsischky G."/>
            <person name="Kolodner R.D."/>
            <person name="LaBaer J."/>
        </authorList>
    </citation>
    <scope>NUCLEOTIDE SEQUENCE [GENOMIC DNA]</scope>
    <source>
        <strain>ATCC 204508 / S288c</strain>
    </source>
</reference>
<reference key="5">
    <citation type="journal article" date="2003" name="Nature">
        <title>Global analysis of protein localization in budding yeast.</title>
        <authorList>
            <person name="Huh W.-K."/>
            <person name="Falvo J.V."/>
            <person name="Gerke L.C."/>
            <person name="Carroll A.S."/>
            <person name="Howson R.W."/>
            <person name="Weissman J.S."/>
            <person name="O'Shea E.K."/>
        </authorList>
    </citation>
    <scope>SUBCELLULAR LOCATION [LARGE SCALE ANALYSIS]</scope>
</reference>
<reference key="6">
    <citation type="journal article" date="2003" name="Nature">
        <title>Global analysis of protein expression in yeast.</title>
        <authorList>
            <person name="Ghaemmaghami S."/>
            <person name="Huh W.-K."/>
            <person name="Bower K."/>
            <person name="Howson R.W."/>
            <person name="Belle A."/>
            <person name="Dephoure N."/>
            <person name="O'Shea E.K."/>
            <person name="Weissman J.S."/>
        </authorList>
    </citation>
    <scope>LEVEL OF PROTEIN EXPRESSION [LARGE SCALE ANALYSIS]</scope>
</reference>
<reference key="7">
    <citation type="journal article" date="2004" name="J. Biol. Chem.">
        <title>Global analyses of sumoylated proteins in Saccharomyces cerevisiae. Induction of protein sumoylation by cellular stresses.</title>
        <authorList>
            <person name="Zhou W."/>
            <person name="Ryan J.J."/>
            <person name="Zhou H."/>
        </authorList>
    </citation>
    <scope>SUMOYLATION [LARGE SCALE ANALYSIS] AT LYS-137</scope>
    <scope>IDENTIFICATION BY MASS SPECTROMETRY</scope>
</reference>
<reference key="8">
    <citation type="journal article" date="2007" name="J. Proteome Res.">
        <title>Large-scale phosphorylation analysis of alpha-factor-arrested Saccharomyces cerevisiae.</title>
        <authorList>
            <person name="Li X."/>
            <person name="Gerber S.A."/>
            <person name="Rudner A.D."/>
            <person name="Beausoleil S.A."/>
            <person name="Haas W."/>
            <person name="Villen J."/>
            <person name="Elias J.E."/>
            <person name="Gygi S.P."/>
        </authorList>
    </citation>
    <scope>IDENTIFICATION BY MASS SPECTROMETRY [LARGE SCALE ANALYSIS]</scope>
    <source>
        <strain>ADR376</strain>
    </source>
</reference>
<reference key="9">
    <citation type="journal article" date="2008" name="Mol. Cell. Proteomics">
        <title>A multidimensional chromatography technology for in-depth phosphoproteome analysis.</title>
        <authorList>
            <person name="Albuquerque C.P."/>
            <person name="Smolka M.B."/>
            <person name="Payne S.H."/>
            <person name="Bafna V."/>
            <person name="Eng J."/>
            <person name="Zhou H."/>
        </authorList>
    </citation>
    <scope>IDENTIFICATION BY MASS SPECTROMETRY [LARGE SCALE ANALYSIS]</scope>
</reference>
<reference key="10">
    <citation type="journal article" date="2009" name="Science">
        <title>Global analysis of Cdk1 substrate phosphorylation sites provides insights into evolution.</title>
        <authorList>
            <person name="Holt L.J."/>
            <person name="Tuch B.B."/>
            <person name="Villen J."/>
            <person name="Johnson A.D."/>
            <person name="Gygi S.P."/>
            <person name="Morgan D.O."/>
        </authorList>
    </citation>
    <scope>PHOSPHORYLATION [LARGE SCALE ANALYSIS] AT SER-23</scope>
    <scope>IDENTIFICATION BY MASS SPECTROMETRY [LARGE SCALE ANALYSIS]</scope>
</reference>
<organism>
    <name type="scientific">Saccharomyces cerevisiae (strain ATCC 204508 / S288c)</name>
    <name type="common">Baker's yeast</name>
    <dbReference type="NCBI Taxonomy" id="559292"/>
    <lineage>
        <taxon>Eukaryota</taxon>
        <taxon>Fungi</taxon>
        <taxon>Dikarya</taxon>
        <taxon>Ascomycota</taxon>
        <taxon>Saccharomycotina</taxon>
        <taxon>Saccharomycetes</taxon>
        <taxon>Saccharomycetales</taxon>
        <taxon>Saccharomycetaceae</taxon>
        <taxon>Saccharomyces</taxon>
    </lineage>
</organism>
<gene>
    <name type="primary">MRP8</name>
    <name type="ordered locus">YKL142W</name>
    <name type="ORF">YKL3</name>
</gene>
<sequence length="219" mass="25097">MSNEIELLQKQVSELQDLVKKQSLIISKTGERVLELQLDKQKHDVTDFDSKFSKSISKKSGSATQFDATDFATNEDLVELVKELQGELNFIEERSIRRLVNSLKKDDDDVIAPLPNADGDIPAISDGVFPKSLKEFKDIPDLKLVRLAKFYERLPPTLKEQEDFENFLEGKVEAFHINETTDEEISKELEKFSKDELDDAFNDVARYLGLSLRRGTEIW</sequence>
<dbReference type="EMBL" id="Z25464">
    <property type="protein sequence ID" value="CAA80956.1"/>
    <property type="molecule type" value="Genomic_DNA"/>
</dbReference>
<dbReference type="EMBL" id="Z28142">
    <property type="protein sequence ID" value="CAA81983.1"/>
    <property type="molecule type" value="Genomic_DNA"/>
</dbReference>
<dbReference type="EMBL" id="AY558357">
    <property type="protein sequence ID" value="AAS56683.1"/>
    <property type="molecule type" value="Genomic_DNA"/>
</dbReference>
<dbReference type="EMBL" id="BK006944">
    <property type="protein sequence ID" value="DAA09020.1"/>
    <property type="molecule type" value="Genomic_DNA"/>
</dbReference>
<dbReference type="PIR" id="S22276">
    <property type="entry name" value="S22276"/>
</dbReference>
<dbReference type="RefSeq" id="NP_012780.1">
    <property type="nucleotide sequence ID" value="NM_001179708.1"/>
</dbReference>
<dbReference type="SMR" id="P35719"/>
<dbReference type="BioGRID" id="33994">
    <property type="interactions" value="83"/>
</dbReference>
<dbReference type="DIP" id="DIP-1437N"/>
<dbReference type="FunCoup" id="P35719">
    <property type="interactions" value="236"/>
</dbReference>
<dbReference type="IntAct" id="P35719">
    <property type="interactions" value="17"/>
</dbReference>
<dbReference type="MINT" id="P35719"/>
<dbReference type="STRING" id="4932.YKL142W"/>
<dbReference type="iPTMnet" id="P35719"/>
<dbReference type="PaxDb" id="4932-YKL142W"/>
<dbReference type="PeptideAtlas" id="P35719"/>
<dbReference type="TopDownProteomics" id="P35719"/>
<dbReference type="EnsemblFungi" id="YKL142W_mRNA">
    <property type="protein sequence ID" value="YKL142W"/>
    <property type="gene ID" value="YKL142W"/>
</dbReference>
<dbReference type="GeneID" id="853715"/>
<dbReference type="KEGG" id="sce:YKL142W"/>
<dbReference type="AGR" id="SGD:S000001625"/>
<dbReference type="SGD" id="S000001625">
    <property type="gene designation" value="MRP8"/>
</dbReference>
<dbReference type="VEuPathDB" id="FungiDB:YKL142W"/>
<dbReference type="eggNOG" id="ENOG502RXKB">
    <property type="taxonomic scope" value="Eukaryota"/>
</dbReference>
<dbReference type="HOGENOM" id="CLU_110337_0_0_1"/>
<dbReference type="InParanoid" id="P35719"/>
<dbReference type="OMA" id="ENFHIND"/>
<dbReference type="OrthoDB" id="4076200at2759"/>
<dbReference type="BioCyc" id="YEAST:G3O-31917-MONOMER"/>
<dbReference type="BioGRID-ORCS" id="853715">
    <property type="hits" value="0 hits in 10 CRISPR screens"/>
</dbReference>
<dbReference type="CD-CODE" id="E03F929F">
    <property type="entry name" value="Stress granule"/>
</dbReference>
<dbReference type="PRO" id="PR:P35719"/>
<dbReference type="Proteomes" id="UP000002311">
    <property type="component" value="Chromosome XI"/>
</dbReference>
<dbReference type="RNAct" id="P35719">
    <property type="molecule type" value="protein"/>
</dbReference>
<dbReference type="GO" id="GO:0005737">
    <property type="term" value="C:cytoplasm"/>
    <property type="evidence" value="ECO:0007005"/>
    <property type="project" value="SGD"/>
</dbReference>
<dbReference type="InterPro" id="IPR012917">
    <property type="entry name" value="DUF3294"/>
</dbReference>
<dbReference type="Pfam" id="PF07957">
    <property type="entry name" value="DUF3294"/>
    <property type="match status" value="1"/>
</dbReference>
<dbReference type="PIRSF" id="PIRSF022944">
    <property type="entry name" value="Ribosomal_MRP8_mit"/>
    <property type="match status" value="1"/>
</dbReference>
<comment type="interaction">
    <interactant intactId="EBI-16255">
        <id>P35719</id>
    </interactant>
    <interactant intactId="EBI-34978">
        <id>Q12230</id>
        <label>LSP1</label>
    </interactant>
    <organismsDiffer>false</organismsDiffer>
    <experiments>3</experiments>
</comment>
<comment type="interaction">
    <interactant intactId="EBI-16255">
        <id>P35719</id>
    </interactant>
    <interactant intactId="EBI-23225">
        <id>P53252</id>
        <label>PIL1</label>
    </interactant>
    <organismsDiffer>false</organismsDiffer>
    <experiments>4</experiments>
</comment>
<comment type="subcellular location">
    <subcellularLocation>
        <location evidence="1">Cytoplasm</location>
    </subcellularLocation>
</comment>
<comment type="miscellaneous">
    <text evidence="2">Present with 1550 molecules/cell in log phase SD medium.</text>
</comment>
<comment type="caution">
    <text evidence="4">Was originally thought to be a mitochondrial ribosomal protein.</text>
</comment>
<evidence type="ECO:0000269" key="1">
    <source>
    </source>
</evidence>
<evidence type="ECO:0000269" key="2">
    <source>
    </source>
</evidence>
<evidence type="ECO:0000269" key="3">
    <source>
    </source>
</evidence>
<evidence type="ECO:0000305" key="4">
    <source>
    </source>
</evidence>
<evidence type="ECO:0007744" key="5">
    <source>
    </source>
</evidence>